<proteinExistence type="inferred from homology"/>
<gene>
    <name evidence="1" type="primary">betA</name>
    <name type="ordered locus">Psyr_4732</name>
</gene>
<accession>Q4ZM63</accession>
<feature type="chain" id="PRO_0000258931" description="Oxygen-dependent choline dehydrogenase">
    <location>
        <begin position="1"/>
        <end position="568"/>
    </location>
</feature>
<feature type="active site" description="Proton acceptor" evidence="1">
    <location>
        <position position="477"/>
    </location>
</feature>
<feature type="binding site" evidence="1">
    <location>
        <begin position="8"/>
        <end position="37"/>
    </location>
    <ligand>
        <name>FAD</name>
        <dbReference type="ChEBI" id="CHEBI:57692"/>
    </ligand>
</feature>
<evidence type="ECO:0000255" key="1">
    <source>
        <dbReference type="HAMAP-Rule" id="MF_00750"/>
    </source>
</evidence>
<protein>
    <recommendedName>
        <fullName evidence="1">Oxygen-dependent choline dehydrogenase</fullName>
        <shortName evidence="1">CDH</shortName>
        <shortName evidence="1">CHD</shortName>
        <ecNumber evidence="1">1.1.99.1</ecNumber>
    </recommendedName>
    <alternativeName>
        <fullName evidence="1">Betaine aldehyde dehydrogenase</fullName>
        <shortName evidence="1">BADH</shortName>
        <ecNumber evidence="1">1.2.1.8</ecNumber>
    </alternativeName>
</protein>
<comment type="function">
    <text evidence="1">Involved in the biosynthesis of the osmoprotectant glycine betaine. Catalyzes the oxidation of choline to betaine aldehyde and betaine aldehyde to glycine betaine at the same rate.</text>
</comment>
<comment type="catalytic activity">
    <reaction evidence="1">
        <text>choline + A = betaine aldehyde + AH2</text>
        <dbReference type="Rhea" id="RHEA:17433"/>
        <dbReference type="ChEBI" id="CHEBI:13193"/>
        <dbReference type="ChEBI" id="CHEBI:15354"/>
        <dbReference type="ChEBI" id="CHEBI:15710"/>
        <dbReference type="ChEBI" id="CHEBI:17499"/>
        <dbReference type="EC" id="1.1.99.1"/>
    </reaction>
</comment>
<comment type="catalytic activity">
    <reaction evidence="1">
        <text>betaine aldehyde + NAD(+) + H2O = glycine betaine + NADH + 2 H(+)</text>
        <dbReference type="Rhea" id="RHEA:15305"/>
        <dbReference type="ChEBI" id="CHEBI:15377"/>
        <dbReference type="ChEBI" id="CHEBI:15378"/>
        <dbReference type="ChEBI" id="CHEBI:15710"/>
        <dbReference type="ChEBI" id="CHEBI:17750"/>
        <dbReference type="ChEBI" id="CHEBI:57540"/>
        <dbReference type="ChEBI" id="CHEBI:57945"/>
        <dbReference type="EC" id="1.2.1.8"/>
    </reaction>
</comment>
<comment type="cofactor">
    <cofactor evidence="1">
        <name>FAD</name>
        <dbReference type="ChEBI" id="CHEBI:57692"/>
    </cofactor>
</comment>
<comment type="pathway">
    <text evidence="1">Amine and polyamine biosynthesis; betaine biosynthesis via choline pathway; betaine aldehyde from choline (cytochrome c reductase route): step 1/1.</text>
</comment>
<comment type="similarity">
    <text evidence="1">Belongs to the GMC oxidoreductase family.</text>
</comment>
<reference key="1">
    <citation type="journal article" date="2005" name="Proc. Natl. Acad. Sci. U.S.A.">
        <title>Comparison of the complete genome sequences of Pseudomonas syringae pv. syringae B728a and pv. tomato DC3000.</title>
        <authorList>
            <person name="Feil H."/>
            <person name="Feil W.S."/>
            <person name="Chain P."/>
            <person name="Larimer F."/>
            <person name="Dibartolo G."/>
            <person name="Copeland A."/>
            <person name="Lykidis A."/>
            <person name="Trong S."/>
            <person name="Nolan M."/>
            <person name="Goltsman E."/>
            <person name="Thiel J."/>
            <person name="Malfatti S."/>
            <person name="Loper J.E."/>
            <person name="Lapidus A."/>
            <person name="Detter J.C."/>
            <person name="Land M."/>
            <person name="Richardson P.M."/>
            <person name="Kyrpides N.C."/>
            <person name="Ivanova N."/>
            <person name="Lindow S.E."/>
        </authorList>
    </citation>
    <scope>NUCLEOTIDE SEQUENCE [LARGE SCALE GENOMIC DNA]</scope>
    <source>
        <strain>B728a</strain>
    </source>
</reference>
<organism>
    <name type="scientific">Pseudomonas syringae pv. syringae (strain B728a)</name>
    <dbReference type="NCBI Taxonomy" id="205918"/>
    <lineage>
        <taxon>Bacteria</taxon>
        <taxon>Pseudomonadati</taxon>
        <taxon>Pseudomonadota</taxon>
        <taxon>Gammaproteobacteria</taxon>
        <taxon>Pseudomonadales</taxon>
        <taxon>Pseudomonadaceae</taxon>
        <taxon>Pseudomonas</taxon>
        <taxon>Pseudomonas syringae</taxon>
    </lineage>
</organism>
<dbReference type="EC" id="1.1.99.1" evidence="1"/>
<dbReference type="EC" id="1.2.1.8" evidence="1"/>
<dbReference type="EMBL" id="CP000075">
    <property type="protein sequence ID" value="AAY39759.1"/>
    <property type="molecule type" value="Genomic_DNA"/>
</dbReference>
<dbReference type="RefSeq" id="WP_003402225.1">
    <property type="nucleotide sequence ID" value="NC_007005.1"/>
</dbReference>
<dbReference type="RefSeq" id="YP_237797.1">
    <property type="nucleotide sequence ID" value="NC_007005.1"/>
</dbReference>
<dbReference type="SMR" id="Q4ZM63"/>
<dbReference type="STRING" id="205918.Psyr_4732"/>
<dbReference type="KEGG" id="psb:Psyr_4732"/>
<dbReference type="PATRIC" id="fig|205918.7.peg.4880"/>
<dbReference type="eggNOG" id="COG2303">
    <property type="taxonomic scope" value="Bacteria"/>
</dbReference>
<dbReference type="HOGENOM" id="CLU_002865_7_1_6"/>
<dbReference type="OrthoDB" id="9785276at2"/>
<dbReference type="UniPathway" id="UPA00529">
    <property type="reaction ID" value="UER00385"/>
</dbReference>
<dbReference type="Proteomes" id="UP000000426">
    <property type="component" value="Chromosome"/>
</dbReference>
<dbReference type="GO" id="GO:0016020">
    <property type="term" value="C:membrane"/>
    <property type="evidence" value="ECO:0007669"/>
    <property type="project" value="TreeGrafter"/>
</dbReference>
<dbReference type="GO" id="GO:0008802">
    <property type="term" value="F:betaine-aldehyde dehydrogenase (NAD+) activity"/>
    <property type="evidence" value="ECO:0007669"/>
    <property type="project" value="UniProtKB-EC"/>
</dbReference>
<dbReference type="GO" id="GO:0008812">
    <property type="term" value="F:choline dehydrogenase activity"/>
    <property type="evidence" value="ECO:0007669"/>
    <property type="project" value="UniProtKB-UniRule"/>
</dbReference>
<dbReference type="GO" id="GO:0050660">
    <property type="term" value="F:flavin adenine dinucleotide binding"/>
    <property type="evidence" value="ECO:0007669"/>
    <property type="project" value="InterPro"/>
</dbReference>
<dbReference type="GO" id="GO:0019285">
    <property type="term" value="P:glycine betaine biosynthetic process from choline"/>
    <property type="evidence" value="ECO:0007669"/>
    <property type="project" value="UniProtKB-UniRule"/>
</dbReference>
<dbReference type="Gene3D" id="3.50.50.60">
    <property type="entry name" value="FAD/NAD(P)-binding domain"/>
    <property type="match status" value="1"/>
</dbReference>
<dbReference type="Gene3D" id="3.30.560.10">
    <property type="entry name" value="Glucose Oxidase, domain 3"/>
    <property type="match status" value="1"/>
</dbReference>
<dbReference type="HAMAP" id="MF_00750">
    <property type="entry name" value="Choline_dehydrogen"/>
    <property type="match status" value="1"/>
</dbReference>
<dbReference type="InterPro" id="IPR011533">
    <property type="entry name" value="BetA"/>
</dbReference>
<dbReference type="InterPro" id="IPR036188">
    <property type="entry name" value="FAD/NAD-bd_sf"/>
</dbReference>
<dbReference type="InterPro" id="IPR012132">
    <property type="entry name" value="GMC_OxRdtase"/>
</dbReference>
<dbReference type="InterPro" id="IPR000172">
    <property type="entry name" value="GMC_OxRdtase_N"/>
</dbReference>
<dbReference type="InterPro" id="IPR007867">
    <property type="entry name" value="GMC_OxRtase_C"/>
</dbReference>
<dbReference type="NCBIfam" id="TIGR01810">
    <property type="entry name" value="betA"/>
    <property type="match status" value="1"/>
</dbReference>
<dbReference type="NCBIfam" id="NF002550">
    <property type="entry name" value="PRK02106.1"/>
    <property type="match status" value="1"/>
</dbReference>
<dbReference type="PANTHER" id="PTHR11552:SF147">
    <property type="entry name" value="CHOLINE DEHYDROGENASE, MITOCHONDRIAL"/>
    <property type="match status" value="1"/>
</dbReference>
<dbReference type="PANTHER" id="PTHR11552">
    <property type="entry name" value="GLUCOSE-METHANOL-CHOLINE GMC OXIDOREDUCTASE"/>
    <property type="match status" value="1"/>
</dbReference>
<dbReference type="Pfam" id="PF05199">
    <property type="entry name" value="GMC_oxred_C"/>
    <property type="match status" value="1"/>
</dbReference>
<dbReference type="Pfam" id="PF00732">
    <property type="entry name" value="GMC_oxred_N"/>
    <property type="match status" value="1"/>
</dbReference>
<dbReference type="PIRSF" id="PIRSF000137">
    <property type="entry name" value="Alcohol_oxidase"/>
    <property type="match status" value="1"/>
</dbReference>
<dbReference type="SUPFAM" id="SSF54373">
    <property type="entry name" value="FAD-linked reductases, C-terminal domain"/>
    <property type="match status" value="1"/>
</dbReference>
<dbReference type="SUPFAM" id="SSF51905">
    <property type="entry name" value="FAD/NAD(P)-binding domain"/>
    <property type="match status" value="1"/>
</dbReference>
<dbReference type="PROSITE" id="PS00623">
    <property type="entry name" value="GMC_OXRED_1"/>
    <property type="match status" value="1"/>
</dbReference>
<dbReference type="PROSITE" id="PS00624">
    <property type="entry name" value="GMC_OXRED_2"/>
    <property type="match status" value="1"/>
</dbReference>
<sequence length="568" mass="62690">MTTQSEYDYIIIGAGSAGNTLAARLTEDAGVTVLLLEAGGPDYRLDFRTQMPAALAFPLQGRRYNWAYETEPEPHMNNRRMECGRGKGLGGSSLINGMCYIRGNAMDYDGWAKEPGLEDWSYLDCLPYFRKAETRDIGPNDYHGGEGPVSVTTPKAGNNPLFHAMVEAGVQAGFPRTDDLNGYQQEGFGPMDRTVTPNGRRASTARGYLDEAKKRSTLTIVTHALTDRILFEGKRAVGVAYLVGDSDTRIQARARKEVLLCGGAIASPQILQRSGVGPAEVLNKLDIPVVHDLPGVGQNLQDHLEMYLQYACTQPVSLYPSLKWWNQPAIGAEWMFLGTGIGASNQFEAGGFIRSSEAFEWPNIQYHFLPVAINYNGTKGVQEHGFQAHVGSMRSPSRGRVQVKSKDPREYPSILFNYMASEQDWQEFRDGIRLTREIMQQPALDPYRGREISPGIDVQSDEALDQFVREHAETAYHPSCSCKMGTDEMAVVDGQGRVHGLQSLRVVDASIMPIITTGNLNAPTIMIAEKIADKIRGRQPLPRSTADYFVAGDKPARGKPLREISHQA</sequence>
<keyword id="KW-0274">FAD</keyword>
<keyword id="KW-0285">Flavoprotein</keyword>
<keyword id="KW-0520">NAD</keyword>
<keyword id="KW-0560">Oxidoreductase</keyword>
<name>BETA_PSEU2</name>